<proteinExistence type="inferred from homology"/>
<accession>Q72NG2</accession>
<organism>
    <name type="scientific">Leptospira interrogans serogroup Icterohaemorrhagiae serovar copenhageni (strain Fiocruz L1-130)</name>
    <dbReference type="NCBI Taxonomy" id="267671"/>
    <lineage>
        <taxon>Bacteria</taxon>
        <taxon>Pseudomonadati</taxon>
        <taxon>Spirochaetota</taxon>
        <taxon>Spirochaetia</taxon>
        <taxon>Leptospirales</taxon>
        <taxon>Leptospiraceae</taxon>
        <taxon>Leptospira</taxon>
    </lineage>
</organism>
<name>RL4_LEPIC</name>
<feature type="chain" id="PRO_0000129230" description="Large ribosomal subunit protein uL4">
    <location>
        <begin position="1"/>
        <end position="211"/>
    </location>
</feature>
<feature type="region of interest" description="Disordered" evidence="2">
    <location>
        <begin position="46"/>
        <end position="89"/>
    </location>
</feature>
<feature type="compositionally biased region" description="Polar residues" evidence="2">
    <location>
        <begin position="46"/>
        <end position="55"/>
    </location>
</feature>
<evidence type="ECO:0000255" key="1">
    <source>
        <dbReference type="HAMAP-Rule" id="MF_01328"/>
    </source>
</evidence>
<evidence type="ECO:0000256" key="2">
    <source>
        <dbReference type="SAM" id="MobiDB-lite"/>
    </source>
</evidence>
<evidence type="ECO:0000305" key="3"/>
<gene>
    <name evidence="1" type="primary">rplD</name>
    <name type="ordered locus">LIC_12872</name>
</gene>
<dbReference type="EMBL" id="AE016823">
    <property type="protein sequence ID" value="AAS71425.1"/>
    <property type="molecule type" value="Genomic_DNA"/>
</dbReference>
<dbReference type="RefSeq" id="WP_000647275.1">
    <property type="nucleotide sequence ID" value="NC_005823.1"/>
</dbReference>
<dbReference type="SMR" id="Q72NG2"/>
<dbReference type="GeneID" id="61142746"/>
<dbReference type="KEGG" id="lic:LIC_12872"/>
<dbReference type="HOGENOM" id="CLU_041575_5_2_12"/>
<dbReference type="Proteomes" id="UP000007037">
    <property type="component" value="Chromosome I"/>
</dbReference>
<dbReference type="GO" id="GO:1990904">
    <property type="term" value="C:ribonucleoprotein complex"/>
    <property type="evidence" value="ECO:0007669"/>
    <property type="project" value="UniProtKB-KW"/>
</dbReference>
<dbReference type="GO" id="GO:0005840">
    <property type="term" value="C:ribosome"/>
    <property type="evidence" value="ECO:0007669"/>
    <property type="project" value="UniProtKB-KW"/>
</dbReference>
<dbReference type="GO" id="GO:0019843">
    <property type="term" value="F:rRNA binding"/>
    <property type="evidence" value="ECO:0007669"/>
    <property type="project" value="UniProtKB-UniRule"/>
</dbReference>
<dbReference type="GO" id="GO:0003735">
    <property type="term" value="F:structural constituent of ribosome"/>
    <property type="evidence" value="ECO:0007669"/>
    <property type="project" value="InterPro"/>
</dbReference>
<dbReference type="GO" id="GO:0006412">
    <property type="term" value="P:translation"/>
    <property type="evidence" value="ECO:0007669"/>
    <property type="project" value="UniProtKB-UniRule"/>
</dbReference>
<dbReference type="FunFam" id="3.40.1370.10:FF:000014">
    <property type="entry name" value="50S ribosomal protein L4"/>
    <property type="match status" value="1"/>
</dbReference>
<dbReference type="Gene3D" id="3.40.1370.10">
    <property type="match status" value="1"/>
</dbReference>
<dbReference type="HAMAP" id="MF_01328_B">
    <property type="entry name" value="Ribosomal_uL4_B"/>
    <property type="match status" value="1"/>
</dbReference>
<dbReference type="InterPro" id="IPR002136">
    <property type="entry name" value="Ribosomal_uL4"/>
</dbReference>
<dbReference type="InterPro" id="IPR013005">
    <property type="entry name" value="Ribosomal_uL4-like"/>
</dbReference>
<dbReference type="InterPro" id="IPR023574">
    <property type="entry name" value="Ribosomal_uL4_dom_sf"/>
</dbReference>
<dbReference type="NCBIfam" id="TIGR03953">
    <property type="entry name" value="rplD_bact"/>
    <property type="match status" value="1"/>
</dbReference>
<dbReference type="PANTHER" id="PTHR10746">
    <property type="entry name" value="50S RIBOSOMAL PROTEIN L4"/>
    <property type="match status" value="1"/>
</dbReference>
<dbReference type="PANTHER" id="PTHR10746:SF6">
    <property type="entry name" value="LARGE RIBOSOMAL SUBUNIT PROTEIN UL4M"/>
    <property type="match status" value="1"/>
</dbReference>
<dbReference type="Pfam" id="PF00573">
    <property type="entry name" value="Ribosomal_L4"/>
    <property type="match status" value="1"/>
</dbReference>
<dbReference type="SUPFAM" id="SSF52166">
    <property type="entry name" value="Ribosomal protein L4"/>
    <property type="match status" value="1"/>
</dbReference>
<comment type="function">
    <text evidence="1">One of the primary rRNA binding proteins, this protein initially binds near the 5'-end of the 23S rRNA. It is important during the early stages of 50S assembly. It makes multiple contacts with different domains of the 23S rRNA in the assembled 50S subunit and ribosome.</text>
</comment>
<comment type="function">
    <text evidence="1">Forms part of the polypeptide exit tunnel.</text>
</comment>
<comment type="subunit">
    <text evidence="1">Part of the 50S ribosomal subunit.</text>
</comment>
<comment type="similarity">
    <text evidence="1">Belongs to the universal ribosomal protein uL4 family.</text>
</comment>
<protein>
    <recommendedName>
        <fullName evidence="1">Large ribosomal subunit protein uL4</fullName>
    </recommendedName>
    <alternativeName>
        <fullName evidence="3">50S ribosomal protein L4</fullName>
    </alternativeName>
</protein>
<keyword id="KW-0687">Ribonucleoprotein</keyword>
<keyword id="KW-0689">Ribosomal protein</keyword>
<keyword id="KW-0694">RNA-binding</keyword>
<keyword id="KW-0699">rRNA-binding</keyword>
<reference key="1">
    <citation type="journal article" date="2004" name="J. Bacteriol.">
        <title>Comparative genomics of two Leptospira interrogans serovars reveals novel insights into physiology and pathogenesis.</title>
        <authorList>
            <person name="Nascimento A.L.T.O."/>
            <person name="Ko A.I."/>
            <person name="Martins E.A.L."/>
            <person name="Monteiro-Vitorello C.B."/>
            <person name="Ho P.L."/>
            <person name="Haake D.A."/>
            <person name="Verjovski-Almeida S."/>
            <person name="Hartskeerl R.A."/>
            <person name="Marques M.V."/>
            <person name="Oliveira M.C."/>
            <person name="Menck C.F.M."/>
            <person name="Leite L.C.C."/>
            <person name="Carrer H."/>
            <person name="Coutinho L.L."/>
            <person name="Degrave W.M."/>
            <person name="Dellagostin O.A."/>
            <person name="El-Dorry H."/>
            <person name="Ferro E.S."/>
            <person name="Ferro M.I.T."/>
            <person name="Furlan L.R."/>
            <person name="Gamberini M."/>
            <person name="Giglioti E.A."/>
            <person name="Goes-Neto A."/>
            <person name="Goldman G.H."/>
            <person name="Goldman M.H.S."/>
            <person name="Harakava R."/>
            <person name="Jeronimo S.M.B."/>
            <person name="Junqueira-de-Azevedo I.L.M."/>
            <person name="Kimura E.T."/>
            <person name="Kuramae E.E."/>
            <person name="Lemos E.G.M."/>
            <person name="Lemos M.V.F."/>
            <person name="Marino C.L."/>
            <person name="Nunes L.R."/>
            <person name="de Oliveira R.C."/>
            <person name="Pereira G.G."/>
            <person name="Reis M.S."/>
            <person name="Schriefer A."/>
            <person name="Siqueira W.J."/>
            <person name="Sommer P."/>
            <person name="Tsai S.M."/>
            <person name="Simpson A.J.G."/>
            <person name="Ferro J.A."/>
            <person name="Camargo L.E.A."/>
            <person name="Kitajima J.P."/>
            <person name="Setubal J.C."/>
            <person name="Van Sluys M.A."/>
        </authorList>
    </citation>
    <scope>NUCLEOTIDE SEQUENCE [LARGE SCALE GENOMIC DNA]</scope>
    <source>
        <strain>Fiocruz L1-130</strain>
    </source>
</reference>
<sequence length="211" mass="23326">MKAQKYSKEGKLISEIELPSALFESKLSVASIYEAIKAENANLRSGNHATKTRSMVSGGGKKPWSQKGTGRARQGSTRAPHWVGGGTVHGPQKRDYSYKVSSKLKHRAVLSILGKKAQASAVKVVEDLDPKEYNTKAFDSIFKNMNLKNTGVIGLLVQGENDFLKKSVRNIPTVKYINSKRISCRDILYNRNLVITEAALKEMLVQYGAQK</sequence>